<reference key="1">
    <citation type="journal article" date="2002" name="Science">
        <title>50 million years of genomic stasis in endosymbiotic bacteria.</title>
        <authorList>
            <person name="Tamas I."/>
            <person name="Klasson L."/>
            <person name="Canbaeck B."/>
            <person name="Naeslund A.K."/>
            <person name="Eriksson A.-S."/>
            <person name="Wernegreen J.J."/>
            <person name="Sandstroem J.P."/>
            <person name="Moran N.A."/>
            <person name="Andersson S.G.E."/>
        </authorList>
    </citation>
    <scope>NUCLEOTIDE SEQUENCE [LARGE SCALE GENOMIC DNA]</scope>
    <source>
        <strain>Sg</strain>
    </source>
</reference>
<feature type="chain" id="PRO_0000148313" description="Putative transport protein BUsg_115">
    <location>
        <begin position="1"/>
        <end position="364"/>
    </location>
</feature>
<feature type="transmembrane region" description="Helical" evidence="1">
    <location>
        <begin position="18"/>
        <end position="38"/>
    </location>
</feature>
<feature type="transmembrane region" description="Helical" evidence="1">
    <location>
        <begin position="40"/>
        <end position="60"/>
    </location>
</feature>
<feature type="transmembrane region" description="Helical" evidence="1">
    <location>
        <begin position="65"/>
        <end position="85"/>
    </location>
</feature>
<feature type="transmembrane region" description="Helical" evidence="1">
    <location>
        <begin position="161"/>
        <end position="181"/>
    </location>
</feature>
<feature type="transmembrane region" description="Helical" evidence="1">
    <location>
        <begin position="215"/>
        <end position="235"/>
    </location>
</feature>
<feature type="transmembrane region" description="Helical" evidence="1">
    <location>
        <begin position="243"/>
        <end position="263"/>
    </location>
</feature>
<feature type="transmembrane region" description="Helical" evidence="1">
    <location>
        <begin position="280"/>
        <end position="300"/>
    </location>
</feature>
<feature type="transmembrane region" description="Helical" evidence="1">
    <location>
        <begin position="309"/>
        <end position="329"/>
    </location>
</feature>
<feature type="transmembrane region" description="Helical" evidence="1">
    <location>
        <begin position="331"/>
        <end position="351"/>
    </location>
</feature>
<organism>
    <name type="scientific">Buchnera aphidicola subsp. Schizaphis graminum (strain Sg)</name>
    <dbReference type="NCBI Taxonomy" id="198804"/>
    <lineage>
        <taxon>Bacteria</taxon>
        <taxon>Pseudomonadati</taxon>
        <taxon>Pseudomonadota</taxon>
        <taxon>Gammaproteobacteria</taxon>
        <taxon>Enterobacterales</taxon>
        <taxon>Erwiniaceae</taxon>
        <taxon>Buchnera</taxon>
    </lineage>
</organism>
<protein>
    <recommendedName>
        <fullName>Putative transport protein BUsg_115</fullName>
    </recommendedName>
</protein>
<accession>Q8KA12</accession>
<dbReference type="EMBL" id="AE013218">
    <property type="protein sequence ID" value="AAM67684.1"/>
    <property type="molecule type" value="Genomic_DNA"/>
</dbReference>
<dbReference type="RefSeq" id="WP_011053650.1">
    <property type="nucleotide sequence ID" value="NC_004061.1"/>
</dbReference>
<dbReference type="SMR" id="Q8KA12"/>
<dbReference type="STRING" id="198804.BUsg_115"/>
<dbReference type="GeneID" id="93003585"/>
<dbReference type="KEGG" id="bas:BUsg_115"/>
<dbReference type="eggNOG" id="COG0628">
    <property type="taxonomic scope" value="Bacteria"/>
</dbReference>
<dbReference type="HOGENOM" id="CLU_041771_1_1_6"/>
<dbReference type="Proteomes" id="UP000000416">
    <property type="component" value="Chromosome"/>
</dbReference>
<dbReference type="GO" id="GO:0005886">
    <property type="term" value="C:plasma membrane"/>
    <property type="evidence" value="ECO:0007669"/>
    <property type="project" value="UniProtKB-SubCell"/>
</dbReference>
<dbReference type="InterPro" id="IPR002549">
    <property type="entry name" value="AI-2E-like"/>
</dbReference>
<dbReference type="NCBIfam" id="NF008216">
    <property type="entry name" value="PRK10983.1"/>
    <property type="match status" value="1"/>
</dbReference>
<dbReference type="PANTHER" id="PTHR21716">
    <property type="entry name" value="TRANSMEMBRANE PROTEIN"/>
    <property type="match status" value="1"/>
</dbReference>
<dbReference type="PANTHER" id="PTHR21716:SF67">
    <property type="entry name" value="TRANSPORT PROTEIN YDIK-RELATED"/>
    <property type="match status" value="1"/>
</dbReference>
<dbReference type="Pfam" id="PF01594">
    <property type="entry name" value="AI-2E_transport"/>
    <property type="match status" value="1"/>
</dbReference>
<keyword id="KW-1003">Cell membrane</keyword>
<keyword id="KW-0472">Membrane</keyword>
<keyword id="KW-0812">Transmembrane</keyword>
<keyword id="KW-1133">Transmembrane helix</keyword>
<keyword id="KW-0813">Transport</keyword>
<gene>
    <name type="ordered locus">BUsg_115</name>
</gene>
<name>Y115_BUCAP</name>
<evidence type="ECO:0000255" key="1"/>
<evidence type="ECO:0000305" key="2"/>
<sequence length="364" mass="40870">MQNPKEKMDLSQFILSLIFIIAISATSFLIIQPFILGFSWASMIVIATWPLMLKMQKFLGGKRLVAVIGMIIILLLLFIIPIVFLVNSLIKTSIPLIHWFSSNNLEFPELIWLQDIPIIGKKIFISYQELLDSDGGELIREIRPYMGRTTEFFIIQAKNCGLFIMHLTLMLLFSLLLYWNGEKISNSIRQFASRLSSRNGEAIVLLSVQAVRAVALGVVVTALIQAVLSGIGLLISGVPYWTLLMILIVFSCLIQLGPLPILIPSVIWLYWNSNTTWGTLLLIWSCFVFILDNILRPFFIRIGSDLPTFLILLGVIGGLLAFGMIGLFIGPVVLVILYRLIVSWIYGISIASFLENTTLKSKSN</sequence>
<proteinExistence type="inferred from homology"/>
<comment type="subcellular location">
    <subcellularLocation>
        <location evidence="2">Cell membrane</location>
        <topology evidence="2">Multi-pass membrane protein</topology>
    </subcellularLocation>
</comment>
<comment type="similarity">
    <text evidence="2">Belongs to the autoinducer-2 exporter (AI-2E) (TC 2.A.86) family.</text>
</comment>